<gene>
    <name evidence="1" type="primary">trmA</name>
    <name type="ordered locus">APL_1979</name>
</gene>
<protein>
    <recommendedName>
        <fullName evidence="1">tRNA/tmRNA (uracil-C(5))-methyltransferase</fullName>
        <ecNumber evidence="1">2.1.1.-</ecNumber>
        <ecNumber evidence="1">2.1.1.35</ecNumber>
    </recommendedName>
    <alternativeName>
        <fullName evidence="1">tRNA (uracil(54)-C(5))-methyltransferase</fullName>
    </alternativeName>
    <alternativeName>
        <fullName evidence="1">tRNA(m5U54)-methyltransferase</fullName>
        <shortName evidence="1">RUMT</shortName>
    </alternativeName>
    <alternativeName>
        <fullName evidence="1">tmRNA (uracil(341)-C(5))-methyltransferase</fullName>
    </alternativeName>
</protein>
<reference key="1">
    <citation type="journal article" date="2008" name="J. Bacteriol.">
        <title>The complete genome sequence of Actinobacillus pleuropneumoniae L20 (serotype 5b).</title>
        <authorList>
            <person name="Foote S.J."/>
            <person name="Bosse J.T."/>
            <person name="Bouevitch A.B."/>
            <person name="Langford P.R."/>
            <person name="Young N.M."/>
            <person name="Nash J.H.E."/>
        </authorList>
    </citation>
    <scope>NUCLEOTIDE SEQUENCE [LARGE SCALE GENOMIC DNA]</scope>
    <source>
        <strain>L20</strain>
    </source>
</reference>
<keyword id="KW-0489">Methyltransferase</keyword>
<keyword id="KW-1185">Reference proteome</keyword>
<keyword id="KW-0949">S-adenosyl-L-methionine</keyword>
<keyword id="KW-0808">Transferase</keyword>
<keyword id="KW-0819">tRNA processing</keyword>
<organism>
    <name type="scientific">Actinobacillus pleuropneumoniae serotype 5b (strain L20)</name>
    <dbReference type="NCBI Taxonomy" id="416269"/>
    <lineage>
        <taxon>Bacteria</taxon>
        <taxon>Pseudomonadati</taxon>
        <taxon>Pseudomonadota</taxon>
        <taxon>Gammaproteobacteria</taxon>
        <taxon>Pasteurellales</taxon>
        <taxon>Pasteurellaceae</taxon>
        <taxon>Actinobacillus</taxon>
    </lineage>
</organism>
<sequence>MNLPIEQYADLLAEKAKNLTALLAPFNPPELEVFESETGHFRMRAEFRVWHDTNEVGENELYHIMFDQETKQRYCVEQFPIANHLINKMMSSLLAEIKGNELLTRKLFQVDYLSTLSGEIAVSMLYHKKLNEEWQAEAAALKARLEHQGFKVQIIGRATKQKIALDRDYVEEVLPVDGRNLIYRQVENSFTQPNAKMNIKMLEWARSCTRHSSGDLLELYCGNGNFSIALAENFRKVLATEISKSSVQSAQYNIEQNGIDNLQIIRMSAEEFTQAMNGVREFNRLKGIDLKAYDCNTIFVDPPRAGLDQDTLNMVQAYERILYISCNPYTLAENLRQLSLTHRIERAALFDQFPYTHHVESGVWLIRK</sequence>
<feature type="chain" id="PRO_1000062988" description="tRNA/tmRNA (uracil-C(5))-methyltransferase">
    <location>
        <begin position="1"/>
        <end position="368"/>
    </location>
</feature>
<feature type="active site" description="Nucleophile" evidence="1">
    <location>
        <position position="326"/>
    </location>
</feature>
<feature type="active site" description="Proton acceptor" evidence="1">
    <location>
        <position position="360"/>
    </location>
</feature>
<feature type="binding site" evidence="1">
    <location>
        <position position="192"/>
    </location>
    <ligand>
        <name>S-adenosyl-L-methionine</name>
        <dbReference type="ChEBI" id="CHEBI:59789"/>
    </ligand>
</feature>
<feature type="binding site" evidence="1">
    <location>
        <position position="220"/>
    </location>
    <ligand>
        <name>S-adenosyl-L-methionine</name>
        <dbReference type="ChEBI" id="CHEBI:59789"/>
    </ligand>
</feature>
<feature type="binding site" evidence="1">
    <location>
        <position position="225"/>
    </location>
    <ligand>
        <name>S-adenosyl-L-methionine</name>
        <dbReference type="ChEBI" id="CHEBI:59789"/>
    </ligand>
</feature>
<feature type="binding site" evidence="1">
    <location>
        <position position="241"/>
    </location>
    <ligand>
        <name>S-adenosyl-L-methionine</name>
        <dbReference type="ChEBI" id="CHEBI:59789"/>
    </ligand>
</feature>
<feature type="binding site" evidence="1">
    <location>
        <position position="301"/>
    </location>
    <ligand>
        <name>S-adenosyl-L-methionine</name>
        <dbReference type="ChEBI" id="CHEBI:59789"/>
    </ligand>
</feature>
<proteinExistence type="inferred from homology"/>
<evidence type="ECO:0000255" key="1">
    <source>
        <dbReference type="HAMAP-Rule" id="MF_01011"/>
    </source>
</evidence>
<accession>A3N3R7</accession>
<comment type="function">
    <text evidence="1">Dual-specificity methyltransferase that catalyzes the formation of 5-methyluridine at position 54 (m5U54) in all tRNAs, and that of position 341 (m5U341) in tmRNA (transfer-mRNA).</text>
</comment>
<comment type="catalytic activity">
    <reaction evidence="1">
        <text>uridine(54) in tRNA + S-adenosyl-L-methionine = 5-methyluridine(54) in tRNA + S-adenosyl-L-homocysteine + H(+)</text>
        <dbReference type="Rhea" id="RHEA:42712"/>
        <dbReference type="Rhea" id="RHEA-COMP:10167"/>
        <dbReference type="Rhea" id="RHEA-COMP:10193"/>
        <dbReference type="ChEBI" id="CHEBI:15378"/>
        <dbReference type="ChEBI" id="CHEBI:57856"/>
        <dbReference type="ChEBI" id="CHEBI:59789"/>
        <dbReference type="ChEBI" id="CHEBI:65315"/>
        <dbReference type="ChEBI" id="CHEBI:74447"/>
        <dbReference type="EC" id="2.1.1.35"/>
    </reaction>
</comment>
<comment type="catalytic activity">
    <reaction evidence="1">
        <text>uridine(341) in tmRNA + S-adenosyl-L-methionine = 5-methyluridine(341) in tmRNA + S-adenosyl-L-homocysteine + H(+)</text>
        <dbReference type="Rhea" id="RHEA:43612"/>
        <dbReference type="Rhea" id="RHEA-COMP:10630"/>
        <dbReference type="Rhea" id="RHEA-COMP:10631"/>
        <dbReference type="ChEBI" id="CHEBI:15378"/>
        <dbReference type="ChEBI" id="CHEBI:57856"/>
        <dbReference type="ChEBI" id="CHEBI:59789"/>
        <dbReference type="ChEBI" id="CHEBI:65315"/>
        <dbReference type="ChEBI" id="CHEBI:74447"/>
    </reaction>
</comment>
<comment type="similarity">
    <text evidence="1">Belongs to the class I-like SAM-binding methyltransferase superfamily. RNA M5U methyltransferase family. TrmA subfamily.</text>
</comment>
<name>TRMA_ACTP2</name>
<dbReference type="EC" id="2.1.1.-" evidence="1"/>
<dbReference type="EC" id="2.1.1.35" evidence="1"/>
<dbReference type="EMBL" id="CP000569">
    <property type="protein sequence ID" value="ABN75053.1"/>
    <property type="molecule type" value="Genomic_DNA"/>
</dbReference>
<dbReference type="RefSeq" id="WP_011848685.1">
    <property type="nucleotide sequence ID" value="NC_009053.1"/>
</dbReference>
<dbReference type="SMR" id="A3N3R7"/>
<dbReference type="STRING" id="416269.APL_1979"/>
<dbReference type="EnsemblBacteria" id="ABN75053">
    <property type="protein sequence ID" value="ABN75053"/>
    <property type="gene ID" value="APL_1979"/>
</dbReference>
<dbReference type="KEGG" id="apl:APL_1979"/>
<dbReference type="PATRIC" id="fig|416269.6.peg.2062"/>
<dbReference type="eggNOG" id="COG2265">
    <property type="taxonomic scope" value="Bacteria"/>
</dbReference>
<dbReference type="HOGENOM" id="CLU_043022_0_0_6"/>
<dbReference type="Proteomes" id="UP000001432">
    <property type="component" value="Chromosome"/>
</dbReference>
<dbReference type="GO" id="GO:0005829">
    <property type="term" value="C:cytosol"/>
    <property type="evidence" value="ECO:0007669"/>
    <property type="project" value="TreeGrafter"/>
</dbReference>
<dbReference type="GO" id="GO:0019843">
    <property type="term" value="F:rRNA binding"/>
    <property type="evidence" value="ECO:0007669"/>
    <property type="project" value="TreeGrafter"/>
</dbReference>
<dbReference type="GO" id="GO:0030697">
    <property type="term" value="F:tRNA (uracil(54)-C5)-methyltransferase activity, S-adenosyl methionine-dependent"/>
    <property type="evidence" value="ECO:0007669"/>
    <property type="project" value="UniProtKB-UniRule"/>
</dbReference>
<dbReference type="GO" id="GO:0000049">
    <property type="term" value="F:tRNA binding"/>
    <property type="evidence" value="ECO:0007669"/>
    <property type="project" value="TreeGrafter"/>
</dbReference>
<dbReference type="GO" id="GO:0030488">
    <property type="term" value="P:tRNA methylation"/>
    <property type="evidence" value="ECO:0007669"/>
    <property type="project" value="UniProtKB-UniRule"/>
</dbReference>
<dbReference type="CDD" id="cd02440">
    <property type="entry name" value="AdoMet_MTases"/>
    <property type="match status" value="1"/>
</dbReference>
<dbReference type="FunFam" id="2.40.50.1070:FF:000001">
    <property type="entry name" value="tRNA/tmRNA (uracil-C(5))-methyltransferase"/>
    <property type="match status" value="1"/>
</dbReference>
<dbReference type="FunFam" id="3.40.50.150:FF:000012">
    <property type="entry name" value="tRNA/tmRNA (uracil-C(5))-methyltransferase"/>
    <property type="match status" value="1"/>
</dbReference>
<dbReference type="Gene3D" id="2.40.50.1070">
    <property type="match status" value="1"/>
</dbReference>
<dbReference type="Gene3D" id="3.40.50.150">
    <property type="entry name" value="Vaccinia Virus protein VP39"/>
    <property type="match status" value="1"/>
</dbReference>
<dbReference type="HAMAP" id="MF_01011">
    <property type="entry name" value="RNA_methyltr_TrmA"/>
    <property type="match status" value="1"/>
</dbReference>
<dbReference type="InterPro" id="IPR030390">
    <property type="entry name" value="MeTrfase_TrmA_AS"/>
</dbReference>
<dbReference type="InterPro" id="IPR030391">
    <property type="entry name" value="MeTrfase_TrmA_CS"/>
</dbReference>
<dbReference type="InterPro" id="IPR029063">
    <property type="entry name" value="SAM-dependent_MTases_sf"/>
</dbReference>
<dbReference type="InterPro" id="IPR011869">
    <property type="entry name" value="TrmA_MeTrfase"/>
</dbReference>
<dbReference type="InterPro" id="IPR010280">
    <property type="entry name" value="U5_MeTrfase_fam"/>
</dbReference>
<dbReference type="NCBIfam" id="TIGR02143">
    <property type="entry name" value="trmA_only"/>
    <property type="match status" value="1"/>
</dbReference>
<dbReference type="PANTHER" id="PTHR47790">
    <property type="entry name" value="TRNA/TMRNA (URACIL-C(5))-METHYLTRANSFERASE"/>
    <property type="match status" value="1"/>
</dbReference>
<dbReference type="PANTHER" id="PTHR47790:SF2">
    <property type="entry name" value="TRNA_TMRNA (URACIL-C(5))-METHYLTRANSFERASE"/>
    <property type="match status" value="1"/>
</dbReference>
<dbReference type="Pfam" id="PF05958">
    <property type="entry name" value="tRNA_U5-meth_tr"/>
    <property type="match status" value="1"/>
</dbReference>
<dbReference type="SUPFAM" id="SSF53335">
    <property type="entry name" value="S-adenosyl-L-methionine-dependent methyltransferases"/>
    <property type="match status" value="1"/>
</dbReference>
<dbReference type="PROSITE" id="PS51687">
    <property type="entry name" value="SAM_MT_RNA_M5U"/>
    <property type="match status" value="1"/>
</dbReference>
<dbReference type="PROSITE" id="PS01230">
    <property type="entry name" value="TRMA_1"/>
    <property type="match status" value="1"/>
</dbReference>
<dbReference type="PROSITE" id="PS01231">
    <property type="entry name" value="TRMA_2"/>
    <property type="match status" value="1"/>
</dbReference>